<feature type="chain" id="PRO_0000283936" description="Non-structural protein 2a">
    <location>
        <begin position="1"/>
        <end position="278"/>
    </location>
</feature>
<name>NS2A_CVBM</name>
<proteinExistence type="inferred from homology"/>
<protein>
    <recommendedName>
        <fullName>Non-structural protein 2a</fullName>
        <shortName>ns2a</shortName>
    </recommendedName>
    <alternativeName>
        <fullName>32 kDa accessory protein</fullName>
    </alternativeName>
    <alternativeName>
        <fullName>32 kDa non-structural protein</fullName>
    </alternativeName>
    <alternativeName>
        <fullName>ns2</fullName>
    </alternativeName>
</protein>
<dbReference type="EMBL" id="U00735">
    <property type="protein sequence ID" value="AAP20417.1"/>
    <property type="molecule type" value="Genomic_RNA"/>
</dbReference>
<dbReference type="SMR" id="Q80B88"/>
<dbReference type="Proteomes" id="UP000007554">
    <property type="component" value="Genome"/>
</dbReference>
<dbReference type="Gene3D" id="3.90.1140.10">
    <property type="entry name" value="Cyclic phosphodiesterase"/>
    <property type="match status" value="1"/>
</dbReference>
<dbReference type="InterPro" id="IPR007878">
    <property type="entry name" value="Coronavirus_NS2A"/>
</dbReference>
<dbReference type="InterPro" id="IPR039573">
    <property type="entry name" value="NS2A-like"/>
</dbReference>
<dbReference type="Pfam" id="PF05213">
    <property type="entry name" value="Corona_NS2A"/>
    <property type="match status" value="1"/>
</dbReference>
<dbReference type="PIRSF" id="PIRSF003890">
    <property type="entry name" value="LigT_coronavirus"/>
    <property type="match status" value="1"/>
</dbReference>
<gene>
    <name type="ORF">2a</name>
</gene>
<organism>
    <name type="scientific">Bovine coronavirus (strain Mebus)</name>
    <name type="common">BCoV</name>
    <name type="synonym">BCV</name>
    <dbReference type="NCBI Taxonomy" id="11132"/>
    <lineage>
        <taxon>Viruses</taxon>
        <taxon>Riboviria</taxon>
        <taxon>Orthornavirae</taxon>
        <taxon>Pisuviricota</taxon>
        <taxon>Pisoniviricetes</taxon>
        <taxon>Nidovirales</taxon>
        <taxon>Cornidovirineae</taxon>
        <taxon>Coronaviridae</taxon>
        <taxon>Orthocoronavirinae</taxon>
        <taxon>Betacoronavirus</taxon>
        <taxon>Embecovirus</taxon>
        <taxon>Betacoronavirus 1</taxon>
    </lineage>
</organism>
<reference key="1">
    <citation type="submission" date="2003-04" db="EMBL/GenBank/DDBJ databases">
        <authorList>
            <person name="Brian D.A."/>
        </authorList>
    </citation>
    <scope>NUCLEOTIDE SEQUENCE [GENOMIC RNA]</scope>
</reference>
<comment type="similarity">
    <text evidence="1">Belongs to the coronaviruses ns2a protein family.</text>
</comment>
<accession>Q80B88</accession>
<organismHost>
    <name type="scientific">Bos taurus</name>
    <name type="common">Bovine</name>
    <dbReference type="NCBI Taxonomy" id="9913"/>
</organismHost>
<sequence>MAVAYADKPNHFINFPLTQFEGFVLNYKGLQFQLLDEGVDCKIQTAPHISLAMLDIQPEDYRSVDVAIQEVIDDMHWGEGFQIKFDNPLILGRCIVLDVKGVEELHDDLVNYIRDKGCVADQSRKWIGHCTIAQLTDAALSIKENVDFINSMQFNYKITINPSSPARLEIVKLGAEKKDGFYETIVSHWMGIRFEYNPPTDKLAMIMGYCCLEVVRKELEEGDLPENDDDAWFKLSYHYENNSWFFRHVYRKSSYFRKSCQNLDCNCLGFYESPVEED</sequence>
<evidence type="ECO:0000305" key="1"/>